<dbReference type="EC" id="7.4.2.14" evidence="8"/>
<dbReference type="EMBL" id="X57523">
    <property type="protein sequence ID" value="CAA40742.1"/>
    <property type="status" value="ALT_INIT"/>
    <property type="molecule type" value="mRNA"/>
</dbReference>
<dbReference type="EMBL" id="Y10231">
    <property type="protein sequence ID" value="CAA71280.1"/>
    <property type="molecule type" value="mRNA"/>
</dbReference>
<dbReference type="PIR" id="S13426">
    <property type="entry name" value="S13426"/>
</dbReference>
<dbReference type="PDB" id="2IXE">
    <property type="method" value="X-ray"/>
    <property type="resolution" value="2.00 A"/>
    <property type="chains" value="A/D=465-725"/>
</dbReference>
<dbReference type="PDB" id="2IXF">
    <property type="method" value="X-ray"/>
    <property type="resolution" value="2.00 A"/>
    <property type="chains" value="A/B/C/D=465-725"/>
</dbReference>
<dbReference type="PDB" id="2IXG">
    <property type="method" value="X-ray"/>
    <property type="resolution" value="2.70 A"/>
    <property type="chains" value="A=465-725"/>
</dbReference>
<dbReference type="PDB" id="4K8O">
    <property type="method" value="X-ray"/>
    <property type="resolution" value="2.65 A"/>
    <property type="chains" value="A=465-725"/>
</dbReference>
<dbReference type="PDBsum" id="2IXE"/>
<dbReference type="PDBsum" id="2IXF"/>
<dbReference type="PDBsum" id="2IXG"/>
<dbReference type="PDBsum" id="4K8O"/>
<dbReference type="SMR" id="P36370"/>
<dbReference type="FunCoup" id="P36370">
    <property type="interactions" value="139"/>
</dbReference>
<dbReference type="IntAct" id="P36370">
    <property type="interactions" value="3"/>
</dbReference>
<dbReference type="STRING" id="10116.ENSRNOP00000000529"/>
<dbReference type="iPTMnet" id="P36370"/>
<dbReference type="PhosphoSitePlus" id="P36370"/>
<dbReference type="jPOST" id="P36370"/>
<dbReference type="PaxDb" id="10116-ENSRNOP00000000529"/>
<dbReference type="UCSC" id="RGD:3817">
    <property type="organism name" value="rat"/>
</dbReference>
<dbReference type="AGR" id="RGD:3817"/>
<dbReference type="RGD" id="3817">
    <property type="gene designation" value="Tap1"/>
</dbReference>
<dbReference type="eggNOG" id="KOG0058">
    <property type="taxonomic scope" value="Eukaryota"/>
</dbReference>
<dbReference type="InParanoid" id="P36370"/>
<dbReference type="PhylomeDB" id="P36370"/>
<dbReference type="BRENDA" id="7.4.2.14">
    <property type="organism ID" value="5301"/>
</dbReference>
<dbReference type="Reactome" id="R-RNO-1236974">
    <property type="pathway name" value="ER-Phagosome pathway"/>
</dbReference>
<dbReference type="Reactome" id="R-RNO-983170">
    <property type="pathway name" value="Antigen Presentation: Folding, assembly and peptide loading of class I MHC"/>
</dbReference>
<dbReference type="EvolutionaryTrace" id="P36370"/>
<dbReference type="PRO" id="PR:P36370"/>
<dbReference type="Proteomes" id="UP000002494">
    <property type="component" value="Unplaced"/>
</dbReference>
<dbReference type="GO" id="GO:0005789">
    <property type="term" value="C:endoplasmic reticulum membrane"/>
    <property type="evidence" value="ECO:0000266"/>
    <property type="project" value="RGD"/>
</dbReference>
<dbReference type="GO" id="GO:0016020">
    <property type="term" value="C:membrane"/>
    <property type="evidence" value="ECO:0000266"/>
    <property type="project" value="RGD"/>
</dbReference>
<dbReference type="GO" id="GO:0042824">
    <property type="term" value="C:MHC class I peptide loading complex"/>
    <property type="evidence" value="ECO:0000314"/>
    <property type="project" value="UniProtKB"/>
</dbReference>
<dbReference type="GO" id="GO:0042825">
    <property type="term" value="C:TAP complex"/>
    <property type="evidence" value="ECO:0000314"/>
    <property type="project" value="UniProtKB"/>
</dbReference>
<dbReference type="GO" id="GO:0015433">
    <property type="term" value="F:ABC-type peptide antigen transporter activity"/>
    <property type="evidence" value="ECO:0000266"/>
    <property type="project" value="RGD"/>
</dbReference>
<dbReference type="GO" id="GO:0043531">
    <property type="term" value="F:ADP binding"/>
    <property type="evidence" value="ECO:0000314"/>
    <property type="project" value="RGD"/>
</dbReference>
<dbReference type="GO" id="GO:0005524">
    <property type="term" value="F:ATP binding"/>
    <property type="evidence" value="ECO:0000314"/>
    <property type="project" value="UniProtKB"/>
</dbReference>
<dbReference type="GO" id="GO:0016887">
    <property type="term" value="F:ATP hydrolysis activity"/>
    <property type="evidence" value="ECO:0000314"/>
    <property type="project" value="RGD"/>
</dbReference>
<dbReference type="GO" id="GO:0046872">
    <property type="term" value="F:metal ion binding"/>
    <property type="evidence" value="ECO:0007669"/>
    <property type="project" value="UniProtKB-KW"/>
</dbReference>
<dbReference type="GO" id="GO:0042288">
    <property type="term" value="F:MHC class I protein binding"/>
    <property type="evidence" value="ECO:0000314"/>
    <property type="project" value="UniProtKB"/>
</dbReference>
<dbReference type="GO" id="GO:0023029">
    <property type="term" value="F:MHC class Ib protein binding"/>
    <property type="evidence" value="ECO:0000266"/>
    <property type="project" value="RGD"/>
</dbReference>
<dbReference type="GO" id="GO:0000166">
    <property type="term" value="F:nucleotide binding"/>
    <property type="evidence" value="ECO:0000314"/>
    <property type="project" value="RGD"/>
</dbReference>
<dbReference type="GO" id="GO:0042605">
    <property type="term" value="F:peptide antigen binding"/>
    <property type="evidence" value="ECO:0000266"/>
    <property type="project" value="RGD"/>
</dbReference>
<dbReference type="GO" id="GO:1904680">
    <property type="term" value="F:peptide transmembrane transporter activity"/>
    <property type="evidence" value="ECO:0000266"/>
    <property type="project" value="RGD"/>
</dbReference>
<dbReference type="GO" id="GO:0042803">
    <property type="term" value="F:protein homodimerization activity"/>
    <property type="evidence" value="ECO:0000353"/>
    <property type="project" value="UniProtKB"/>
</dbReference>
<dbReference type="GO" id="GO:0044877">
    <property type="term" value="F:protein-containing complex binding"/>
    <property type="evidence" value="ECO:0000314"/>
    <property type="project" value="RGD"/>
</dbReference>
<dbReference type="GO" id="GO:0046978">
    <property type="term" value="F:TAP1 binding"/>
    <property type="evidence" value="ECO:0000353"/>
    <property type="project" value="UniProtKB"/>
</dbReference>
<dbReference type="GO" id="GO:0046979">
    <property type="term" value="F:TAP2 binding"/>
    <property type="evidence" value="ECO:0000353"/>
    <property type="project" value="UniProtKB"/>
</dbReference>
<dbReference type="GO" id="GO:0046980">
    <property type="term" value="F:tapasin binding"/>
    <property type="evidence" value="ECO:0000314"/>
    <property type="project" value="RGD"/>
</dbReference>
<dbReference type="GO" id="GO:0002250">
    <property type="term" value="P:adaptive immune response"/>
    <property type="evidence" value="ECO:0007669"/>
    <property type="project" value="UniProtKB-KW"/>
</dbReference>
<dbReference type="GO" id="GO:0019885">
    <property type="term" value="P:antigen processing and presentation of endogenous peptide antigen via MHC class I"/>
    <property type="evidence" value="ECO:0000266"/>
    <property type="project" value="RGD"/>
</dbReference>
<dbReference type="GO" id="GO:0046967">
    <property type="term" value="P:cytosol to endoplasmic reticulum transport"/>
    <property type="evidence" value="ECO:0000266"/>
    <property type="project" value="RGD"/>
</dbReference>
<dbReference type="GO" id="GO:0006952">
    <property type="term" value="P:defense response"/>
    <property type="evidence" value="ECO:0000266"/>
    <property type="project" value="RGD"/>
</dbReference>
<dbReference type="GO" id="GO:0046968">
    <property type="term" value="P:peptide antigen transport"/>
    <property type="evidence" value="ECO:0000304"/>
    <property type="project" value="RGD"/>
</dbReference>
<dbReference type="GO" id="GO:0015833">
    <property type="term" value="P:peptide transport"/>
    <property type="evidence" value="ECO:0000315"/>
    <property type="project" value="RGD"/>
</dbReference>
<dbReference type="GO" id="GO:0042270">
    <property type="term" value="P:protection from natural killer cell mediated cytotoxicity"/>
    <property type="evidence" value="ECO:0000315"/>
    <property type="project" value="RGD"/>
</dbReference>
<dbReference type="GO" id="GO:0015031">
    <property type="term" value="P:protein transport"/>
    <property type="evidence" value="ECO:0007669"/>
    <property type="project" value="UniProtKB-KW"/>
</dbReference>
<dbReference type="GO" id="GO:0055085">
    <property type="term" value="P:transmembrane transport"/>
    <property type="evidence" value="ECO:0000318"/>
    <property type="project" value="GO_Central"/>
</dbReference>
<dbReference type="FunFam" id="3.40.50.300:FF:000140">
    <property type="entry name" value="Lipid A export ATP-binding/permease protein MsbA"/>
    <property type="match status" value="1"/>
</dbReference>
<dbReference type="FunFam" id="1.20.1560.10:FF:000068">
    <property type="entry name" value="Transporter 1 ATP-binding cassette sub-family B"/>
    <property type="match status" value="1"/>
</dbReference>
<dbReference type="Gene3D" id="1.20.1560.10">
    <property type="entry name" value="ABC transporter type 1, transmembrane domain"/>
    <property type="match status" value="1"/>
</dbReference>
<dbReference type="Gene3D" id="3.40.50.300">
    <property type="entry name" value="P-loop containing nucleotide triphosphate hydrolases"/>
    <property type="match status" value="1"/>
</dbReference>
<dbReference type="InterPro" id="IPR003593">
    <property type="entry name" value="AAA+_ATPase"/>
</dbReference>
<dbReference type="InterPro" id="IPR011527">
    <property type="entry name" value="ABC1_TM_dom"/>
</dbReference>
<dbReference type="InterPro" id="IPR036640">
    <property type="entry name" value="ABC1_TM_sf"/>
</dbReference>
<dbReference type="InterPro" id="IPR013305">
    <property type="entry name" value="ABC_Tap-like"/>
</dbReference>
<dbReference type="InterPro" id="IPR003439">
    <property type="entry name" value="ABC_transporter-like_ATP-bd"/>
</dbReference>
<dbReference type="InterPro" id="IPR017871">
    <property type="entry name" value="ABC_transporter-like_CS"/>
</dbReference>
<dbReference type="InterPro" id="IPR027417">
    <property type="entry name" value="P-loop_NTPase"/>
</dbReference>
<dbReference type="InterPro" id="IPR039421">
    <property type="entry name" value="Type_1_exporter"/>
</dbReference>
<dbReference type="NCBIfam" id="TIGR00958">
    <property type="entry name" value="3a01208"/>
    <property type="match status" value="1"/>
</dbReference>
<dbReference type="PANTHER" id="PTHR43394:SF13">
    <property type="entry name" value="ANTIGEN PEPTIDE TRANSPORTER 1"/>
    <property type="match status" value="1"/>
</dbReference>
<dbReference type="PANTHER" id="PTHR43394">
    <property type="entry name" value="ATP-DEPENDENT PERMEASE MDL1, MITOCHONDRIAL"/>
    <property type="match status" value="1"/>
</dbReference>
<dbReference type="Pfam" id="PF00664">
    <property type="entry name" value="ABC_membrane"/>
    <property type="match status" value="1"/>
</dbReference>
<dbReference type="Pfam" id="PF00005">
    <property type="entry name" value="ABC_tran"/>
    <property type="match status" value="1"/>
</dbReference>
<dbReference type="PIRSF" id="PIRSF002773">
    <property type="entry name" value="ABC_prm/ATPase_B"/>
    <property type="match status" value="1"/>
</dbReference>
<dbReference type="PRINTS" id="PR01896">
    <property type="entry name" value="TAP1PROTEIN"/>
</dbReference>
<dbReference type="SMART" id="SM00382">
    <property type="entry name" value="AAA"/>
    <property type="match status" value="1"/>
</dbReference>
<dbReference type="SUPFAM" id="SSF90123">
    <property type="entry name" value="ABC transporter transmembrane region"/>
    <property type="match status" value="1"/>
</dbReference>
<dbReference type="SUPFAM" id="SSF52540">
    <property type="entry name" value="P-loop containing nucleoside triphosphate hydrolases"/>
    <property type="match status" value="1"/>
</dbReference>
<dbReference type="PROSITE" id="PS50929">
    <property type="entry name" value="ABC_TM1F"/>
    <property type="match status" value="1"/>
</dbReference>
<dbReference type="PROSITE" id="PS00211">
    <property type="entry name" value="ABC_TRANSPORTER_1"/>
    <property type="match status" value="1"/>
</dbReference>
<dbReference type="PROSITE" id="PS50893">
    <property type="entry name" value="ABC_TRANSPORTER_2"/>
    <property type="match status" value="1"/>
</dbReference>
<comment type="function">
    <text evidence="1 5">ABC transporter associated with antigen processing (PubMed:17018292). In complex with TAP2 mediates unidirectional translocation of peptide antigens from cytosol to endoplasmic reticulum (ER) for loading onto MHC class I (MHCI) molecules (By similarity). Uses the chemical energy of ATP to export peptides against the concentration gradient (By similarity). During the transport cycle alternates between 'inward-facing' state with peptide binding site facing the cytosol to 'outward-facing' state with peptide binding site facing the ER lumen. Peptide antigen binding to ATP-loaded TAP1-TAP2 induces a switch to hydrolysis-competent 'outward-facing' conformation ready for peptide loading onto nascent MHCI molecules. Subsequently ATP hydrolysis resets the transporter to the 'inward facing' state for a new cycle (By similarity). As a component of the peptide loading complex (PLC), acts as a molecular scaffold essential for peptide-MHCI assembly and antigen presentation (By similarity).</text>
</comment>
<comment type="catalytic activity">
    <reaction evidence="8">
        <text>a peptide antigen(in) + ATP + H2O = a peptide antigen(out) + ADP + phosphate + H(+)</text>
        <dbReference type="Rhea" id="RHEA:65972"/>
        <dbReference type="Rhea" id="RHEA-COMP:16941"/>
        <dbReference type="ChEBI" id="CHEBI:15377"/>
        <dbReference type="ChEBI" id="CHEBI:15378"/>
        <dbReference type="ChEBI" id="CHEBI:30616"/>
        <dbReference type="ChEBI" id="CHEBI:43474"/>
        <dbReference type="ChEBI" id="CHEBI:166823"/>
        <dbReference type="ChEBI" id="CHEBI:456216"/>
        <dbReference type="EC" id="7.4.2.14"/>
    </reaction>
    <physiologicalReaction direction="left-to-right" evidence="8">
        <dbReference type="Rhea" id="RHEA:65973"/>
    </physiologicalReaction>
</comment>
<comment type="cofactor">
    <cofactor evidence="5 6">
        <name>Mg(2+)</name>
        <dbReference type="ChEBI" id="CHEBI:18420"/>
    </cofactor>
</comment>
<comment type="subunit">
    <text evidence="1">Heterodimer of TAP1 and TAP2 (TAP1-TAP2). A component of the peptide loading complex (PLC), interacts via TAPBP with MHCI heterodimer; this interaction mediates peptide-MHCI assembly. Interacts with PSMB5 and PSMB8.</text>
</comment>
<comment type="interaction">
    <interactant intactId="EBI-11303917">
        <id>P36370</id>
    </interactant>
    <interactant intactId="EBI-11304538">
        <id>Q99JC6</id>
        <label>Tapbp</label>
    </interactant>
    <organismsDiffer>false</organismsDiffer>
    <experiments>2</experiments>
</comment>
<comment type="subcellular location">
    <subcellularLocation>
        <location evidence="1">Endoplasmic reticulum membrane</location>
        <topology evidence="2">Multi-pass membrane protein</topology>
    </subcellularLocation>
    <text>The transmembrane segments seem to form a pore in the membrane.</text>
</comment>
<comment type="domain">
    <text evidence="1">The peptide-binding site is shared between the cytoplasmic loops of TAP1 and TAP2.</text>
</comment>
<comment type="domain">
    <text evidence="5">The nucleotide-binding domain (NBD) mediates ATP hydrolysis coupled to peptide translocation. Two ATP molecules are accommodated at distinct nucleotide binding sites (NBS) at TAP1-TAP2 dimer interface. Each NBS is formed by Walker A (GxxGxGKST) and Q-loop motifs from NBD of one subunit, while the NBD from the second subunit completes the active site by contributing the C loop motif (LSGGQ). Each ATP molecule is coordinated via the beta- and gamma-phosphates to a Mg2+ ion, which is necessary for ATP hydrolysis.</text>
</comment>
<comment type="similarity">
    <text evidence="7">Belongs to the ABC transporter superfamily. ABCB family. MHC peptide exporter (TC 3.A.1.209) subfamily.</text>
</comment>
<comment type="sequence caution" evidence="7">
    <conflict type="erroneous initiation">
        <sequence resource="EMBL-CDS" id="CAA40742"/>
    </conflict>
</comment>
<accession>P36370</accession>
<protein>
    <recommendedName>
        <fullName>Antigen peptide transporter 1</fullName>
        <shortName>APT1</shortName>
        <ecNumber evidence="8">7.4.2.14</ecNumber>
    </recommendedName>
    <alternativeName>
        <fullName>ATP-binding cassette sub-family B member 2</fullName>
    </alternativeName>
    <alternativeName>
        <fullName>Peptide transporter TAP1</fullName>
    </alternativeName>
</protein>
<gene>
    <name type="primary">Tap1</name>
    <name type="synonym">Abcb2</name>
    <name type="synonym">Mtp1</name>
</gene>
<proteinExistence type="evidence at protein level"/>
<keyword id="KW-0002">3D-structure</keyword>
<keyword id="KW-1064">Adaptive immunity</keyword>
<keyword id="KW-0067">ATP-binding</keyword>
<keyword id="KW-0256">Endoplasmic reticulum</keyword>
<keyword id="KW-0391">Immunity</keyword>
<keyword id="KW-0460">Magnesium</keyword>
<keyword id="KW-0472">Membrane</keyword>
<keyword id="KW-0479">Metal-binding</keyword>
<keyword id="KW-0547">Nucleotide-binding</keyword>
<keyword id="KW-0571">Peptide transport</keyword>
<keyword id="KW-0653">Protein transport</keyword>
<keyword id="KW-1185">Reference proteome</keyword>
<keyword id="KW-1278">Translocase</keyword>
<keyword id="KW-0812">Transmembrane</keyword>
<keyword id="KW-1133">Transmembrane helix</keyword>
<keyword id="KW-0813">Transport</keyword>
<evidence type="ECO:0000250" key="1">
    <source>
        <dbReference type="UniProtKB" id="Q03518"/>
    </source>
</evidence>
<evidence type="ECO:0000255" key="2"/>
<evidence type="ECO:0000255" key="3">
    <source>
        <dbReference type="PROSITE-ProRule" id="PRU00434"/>
    </source>
</evidence>
<evidence type="ECO:0000255" key="4">
    <source>
        <dbReference type="PROSITE-ProRule" id="PRU00441"/>
    </source>
</evidence>
<evidence type="ECO:0000269" key="5">
    <source>
    </source>
</evidence>
<evidence type="ECO:0000269" key="6">
    <source>
    </source>
</evidence>
<evidence type="ECO:0000305" key="7"/>
<evidence type="ECO:0000305" key="8">
    <source>
    </source>
</evidence>
<evidence type="ECO:0007744" key="9">
    <source>
        <dbReference type="PDB" id="2IXE"/>
    </source>
</evidence>
<evidence type="ECO:0007744" key="10">
    <source>
        <dbReference type="PDB" id="2IXF"/>
    </source>
</evidence>
<evidence type="ECO:0007744" key="11">
    <source>
        <dbReference type="PDB" id="2IXG"/>
    </source>
</evidence>
<evidence type="ECO:0007744" key="12">
    <source>
        <dbReference type="PDB" id="4K8O"/>
    </source>
</evidence>
<evidence type="ECO:0007829" key="13">
    <source>
        <dbReference type="PDB" id="2IXE"/>
    </source>
</evidence>
<evidence type="ECO:0007829" key="14">
    <source>
        <dbReference type="PDB" id="2IXF"/>
    </source>
</evidence>
<organism>
    <name type="scientific">Rattus norvegicus</name>
    <name type="common">Rat</name>
    <dbReference type="NCBI Taxonomy" id="10116"/>
    <lineage>
        <taxon>Eukaryota</taxon>
        <taxon>Metazoa</taxon>
        <taxon>Chordata</taxon>
        <taxon>Craniata</taxon>
        <taxon>Vertebrata</taxon>
        <taxon>Euteleostomi</taxon>
        <taxon>Mammalia</taxon>
        <taxon>Eutheria</taxon>
        <taxon>Euarchontoglires</taxon>
        <taxon>Glires</taxon>
        <taxon>Rodentia</taxon>
        <taxon>Myomorpha</taxon>
        <taxon>Muroidea</taxon>
        <taxon>Muridae</taxon>
        <taxon>Murinae</taxon>
        <taxon>Rattus</taxon>
    </lineage>
</organism>
<feature type="chain" id="PRO_0000093328" description="Antigen peptide transporter 1">
    <location>
        <begin position="1"/>
        <end position="725"/>
    </location>
</feature>
<feature type="topological domain" description="Cytoplasmic" evidence="2">
    <location>
        <begin position="1"/>
        <end position="8"/>
    </location>
</feature>
<feature type="transmembrane region" description="Helical; Name=1" evidence="4">
    <location>
        <begin position="9"/>
        <end position="29"/>
    </location>
</feature>
<feature type="topological domain" description="Lumenal" evidence="2">
    <location>
        <begin position="30"/>
        <end position="38"/>
    </location>
</feature>
<feature type="transmembrane region" description="Helical; Name=2" evidence="4">
    <location>
        <begin position="39"/>
        <end position="60"/>
    </location>
</feature>
<feature type="topological domain" description="Cytoplasmic" evidence="2">
    <location>
        <begin position="61"/>
        <end position="67"/>
    </location>
</feature>
<feature type="transmembrane region" description="Helical; Name=3" evidence="4">
    <location>
        <begin position="68"/>
        <end position="88"/>
    </location>
</feature>
<feature type="topological domain" description="Lumenal" evidence="2">
    <location>
        <begin position="89"/>
        <end position="110"/>
    </location>
</feature>
<feature type="transmembrane region" description="Helical; Name=4" evidence="4">
    <location>
        <begin position="111"/>
        <end position="131"/>
    </location>
</feature>
<feature type="topological domain" description="Cytoplasmic" evidence="2">
    <location>
        <begin position="132"/>
        <end position="163"/>
    </location>
</feature>
<feature type="transmembrane region" description="Helical; Name=5" evidence="4">
    <location>
        <begin position="164"/>
        <end position="184"/>
    </location>
</feature>
<feature type="topological domain" description="Lumenal" evidence="2">
    <location>
        <begin position="185"/>
        <end position="204"/>
    </location>
</feature>
<feature type="transmembrane region" description="Helical; Name=6" evidence="4">
    <location>
        <begin position="205"/>
        <end position="225"/>
    </location>
</feature>
<feature type="topological domain" description="Cytoplasmic" evidence="2">
    <location>
        <begin position="226"/>
        <end position="275"/>
    </location>
</feature>
<feature type="transmembrane region" description="Helical; Name=7" evidence="4">
    <location>
        <begin position="276"/>
        <end position="296"/>
    </location>
</feature>
<feature type="topological domain" description="Lumenal" evidence="2">
    <location>
        <begin position="297"/>
        <end position="305"/>
    </location>
</feature>
<feature type="transmembrane region" description="Helical; Name=8" evidence="4">
    <location>
        <begin position="306"/>
        <end position="326"/>
    </location>
</feature>
<feature type="topological domain" description="Cytoplasmic" evidence="2">
    <location>
        <begin position="327"/>
        <end position="395"/>
    </location>
</feature>
<feature type="transmembrane region" description="Helical; Name=9" evidence="4">
    <location>
        <begin position="396"/>
        <end position="416"/>
    </location>
</feature>
<feature type="topological domain" description="Lumenal" evidence="2">
    <location>
        <begin position="417"/>
        <end position="420"/>
    </location>
</feature>
<feature type="transmembrane region" description="Helical; Name=10" evidence="4">
    <location>
        <begin position="421"/>
        <end position="441"/>
    </location>
</feature>
<feature type="topological domain" description="Cytoplasmic" evidence="2">
    <location>
        <begin position="442"/>
        <end position="725"/>
    </location>
</feature>
<feature type="domain" description="ABC transmembrane type-1" evidence="4">
    <location>
        <begin position="164"/>
        <end position="447"/>
    </location>
</feature>
<feature type="domain" description="ABC transporter" evidence="3">
    <location>
        <begin position="480"/>
        <end position="719"/>
    </location>
</feature>
<feature type="region of interest" description="Part of the peptide-binding site" evidence="1">
    <location>
        <begin position="352"/>
        <end position="397"/>
    </location>
</feature>
<feature type="region of interest" description="Part of the peptide-binding site" evidence="1">
    <location>
        <begin position="430"/>
        <end position="464"/>
    </location>
</feature>
<feature type="binding site" evidence="3 5 9 10 11 12">
    <location>
        <begin position="515"/>
        <end position="523"/>
    </location>
    <ligand>
        <name>ATP</name>
        <dbReference type="ChEBI" id="CHEBI:30616"/>
    </ligand>
</feature>
<feature type="binding site" evidence="5 6 9 10 12">
    <location>
        <position position="522"/>
    </location>
    <ligand>
        <name>Mg(2+)</name>
        <dbReference type="ChEBI" id="CHEBI:18420"/>
    </ligand>
</feature>
<feature type="binding site" evidence="5 6 9 10 12">
    <location>
        <begin position="618"/>
        <end position="624"/>
    </location>
    <ligand>
        <name>ATP</name>
        <dbReference type="ChEBI" id="CHEBI:30616"/>
    </ligand>
</feature>
<feature type="binding site" evidence="5 6 9 11 12">
    <location>
        <position position="678"/>
    </location>
    <ligand>
        <name>ATP</name>
        <dbReference type="ChEBI" id="CHEBI:30616"/>
    </ligand>
</feature>
<feature type="site" description="Inter-subunit salt bridge with TAPBP" evidence="1">
    <location>
        <position position="17"/>
    </location>
</feature>
<feature type="mutagenesis site" description="Complete loss of ATPase activity; when associated with N-645. Impairs peptide loading onto MHCI." evidence="5">
    <original>SG</original>
    <variation>AV</variation>
    <location>
        <begin position="621"/>
        <end position="622"/>
    </location>
</feature>
<feature type="mutagenesis site" description="Increases ATPase activity by 8-fold; when associated with H-678." evidence="5">
    <original>D</original>
    <variation>E</variation>
    <location>
        <position position="645"/>
    </location>
</feature>
<feature type="mutagenesis site" description="Complete loss of ATPase activity; when associated with A-621 and V-622." evidence="5">
    <original>D</original>
    <variation>N</variation>
    <location>
        <position position="645"/>
    </location>
</feature>
<feature type="mutagenesis site" description="Impairs ATPase activity; when associated with H-678." evidence="5">
    <original>D</original>
    <variation>Q</variation>
    <location>
        <position position="645"/>
    </location>
</feature>
<feature type="mutagenesis site" description="Decreases ATP-driven nucleotide binding domain (NBD) dimerization." evidence="6">
    <original>D</original>
    <variation>A</variation>
    <variation>N</variation>
    <location>
        <position position="651"/>
    </location>
</feature>
<feature type="mutagenesis site" description="Increases ATPase activity by 8-fold; when associated with E-645. Impairs ATPase activity; when associated with Q-645." evidence="5">
    <original>Q</original>
    <variation>H</variation>
    <location>
        <position position="678"/>
    </location>
</feature>
<feature type="turn" evidence="14">
    <location>
        <begin position="466"/>
        <end position="469"/>
    </location>
</feature>
<feature type="strand" evidence="13">
    <location>
        <begin position="480"/>
        <end position="487"/>
    </location>
</feature>
<feature type="strand" evidence="13">
    <location>
        <begin position="498"/>
        <end position="505"/>
    </location>
</feature>
<feature type="strand" evidence="13">
    <location>
        <begin position="510"/>
        <end position="514"/>
    </location>
</feature>
<feature type="helix" evidence="13">
    <location>
        <begin position="521"/>
        <end position="528"/>
    </location>
</feature>
<feature type="strand" evidence="13">
    <location>
        <begin position="535"/>
        <end position="541"/>
    </location>
</feature>
<feature type="helix" evidence="13">
    <location>
        <begin position="546"/>
        <end position="548"/>
    </location>
</feature>
<feature type="helix" evidence="13">
    <location>
        <begin position="551"/>
        <end position="557"/>
    </location>
</feature>
<feature type="strand" evidence="13">
    <location>
        <begin position="558"/>
        <end position="561"/>
    </location>
</feature>
<feature type="strand" evidence="13">
    <location>
        <begin position="569"/>
        <end position="571"/>
    </location>
</feature>
<feature type="helix" evidence="13">
    <location>
        <begin position="572"/>
        <end position="577"/>
    </location>
</feature>
<feature type="helix" evidence="13">
    <location>
        <begin position="586"/>
        <end position="595"/>
    </location>
</feature>
<feature type="helix" evidence="13">
    <location>
        <begin position="599"/>
        <end position="604"/>
    </location>
</feature>
<feature type="helix" evidence="13">
    <location>
        <begin position="608"/>
        <end position="610"/>
    </location>
</feature>
<feature type="helix" evidence="13">
    <location>
        <begin position="615"/>
        <end position="617"/>
    </location>
</feature>
<feature type="helix" evidence="13">
    <location>
        <begin position="622"/>
        <end position="634"/>
    </location>
</feature>
<feature type="strand" evidence="13">
    <location>
        <begin position="639"/>
        <end position="645"/>
    </location>
</feature>
<feature type="turn" evidence="13">
    <location>
        <begin position="646"/>
        <end position="649"/>
    </location>
</feature>
<feature type="helix" evidence="13">
    <location>
        <begin position="652"/>
        <end position="664"/>
    </location>
</feature>
<feature type="turn" evidence="13">
    <location>
        <begin position="666"/>
        <end position="670"/>
    </location>
</feature>
<feature type="strand" evidence="13">
    <location>
        <begin position="671"/>
        <end position="676"/>
    </location>
</feature>
<feature type="helix" evidence="13">
    <location>
        <begin position="680"/>
        <end position="683"/>
    </location>
</feature>
<feature type="strand" evidence="13">
    <location>
        <begin position="687"/>
        <end position="693"/>
    </location>
</feature>
<feature type="strand" evidence="13">
    <location>
        <begin position="696"/>
        <end position="701"/>
    </location>
</feature>
<feature type="helix" evidence="13">
    <location>
        <begin position="703"/>
        <end position="709"/>
    </location>
</feature>
<feature type="helix" evidence="13">
    <location>
        <begin position="712"/>
        <end position="718"/>
    </location>
</feature>
<reference key="1">
    <citation type="journal article" date="1990" name="Nature">
        <title>MHC class II region encoding proteins related to the multidrug resistance family of transmembrane transporters.</title>
        <authorList>
            <person name="Deverson E.V."/>
            <person name="Gow I.R."/>
            <person name="Coadwell W.J."/>
            <person name="Monaco J.J."/>
            <person name="Butcher G.W."/>
            <person name="Howard J.C."/>
        </authorList>
    </citation>
    <scope>NUCLEOTIDE SEQUENCE [MRNA]</scope>
</reference>
<reference key="2">
    <citation type="submission" date="1997-01" db="EMBL/GenBank/DDBJ databases">
        <authorList>
            <person name="Deverson E.V."/>
        </authorList>
    </citation>
    <scope>NUCLEOTIDE SEQUENCE [MRNA]</scope>
    <source>
        <strain>BDIX</strain>
        <tissue>Lymphocyte</tissue>
    </source>
</reference>
<reference key="3">
    <citation type="journal article" date="2006" name="Mol. Cell">
        <title>Distinct structural and functional properties of the ATPase sites in an asymmetric ABC transporter.</title>
        <authorList>
            <person name="Procko E."/>
            <person name="Ferrin-O'Connell I."/>
            <person name="Ng S.L."/>
            <person name="Gaudet R."/>
        </authorList>
    </citation>
    <scope>X-RAY CRYSTALLOGRAPHY (2.00 ANGSTROMS) OF 465-725 IN COMPLEX WITH ATP AND MAGNESIUM</scope>
    <scope>COFACTOR</scope>
    <scope>DOMAIN</scope>
    <scope>FUNCTION</scope>
    <scope>CATALYTIC ACTIVITY</scope>
    <scope>MUTAGENESIS OF 621-SER-GLY-622; ASP-645; ASP-651 AND GLN-678</scope>
</reference>
<reference key="4">
    <citation type="journal article" date="2014" name="Nat. Commun.">
        <title>Mechanistic determinants of the directionality and energetics of active export by a heterodimeric ABC transporter.</title>
        <authorList>
            <person name="Grossmann N."/>
            <person name="Vakkasoglu A.S."/>
            <person name="Hulpke S."/>
            <person name="Abele R."/>
            <person name="Gaudet R."/>
            <person name="Tampe R."/>
        </authorList>
    </citation>
    <scope>X-RAY CRYSTALLOGRAPHY (2.65 ANGSTROMS) OF 465-725 IN COMPLEX WITH ATP AND MAGNESIUM</scope>
    <scope>COFACTOR</scope>
    <scope>MUTAGENESIS OF ASP-251</scope>
</reference>
<sequence>MAAHAWPTAALLLLLVDWLLLRPVLPGIFSLLVPEVPLLRVWAVGLSRWAILGLGVRGVLGVTAGARGWLAALQPLVAALGLALPGLASFRKLSAWGALREGDNAGLLHWNSRLDAFVLSYVAALPAAALWHKLGGFWAPSGHKGAGDMLCRMLGFLDSKKGRLHLVLVLLILSCLGEMAIPFFTGRITDWILQDKTAPSFARNMWLMCILTIASTVLEFAGDGIYNITMGHMHSRVHGEVFRAVLHQETGFFLKNPTGSITSRVTEDTSNVCESISDKLNLFLWYLGRGLCLLAFMIWGSFYLTVVTLLSLPLLFLLPRRLGKVYQSLAVKVQESLAKSTQVALEALSAMPTVRSFANEEGEAQKFRQKLEEMKPLNKKEALAYVTEVWTMSVSGMLLKVGILYLGGQLVVRGAVSSGNLVSFVLYQLQFTRAVEVLLSIYPSMQKSVGASEKIFEYLDRTPCSPLSGSLAPLNMKGLVKFQDVSFAYPNHPNVQVLQGLTFTLYPGKVTALVGPNGSGKSTVAALLQNLYQPTGGKVLLDGEPLVQYDHHYLHTQVAAVGQEPLLFGRSFRENIAYGLTRTPTMEEITAVAMESGAHDFISGFPQGYDTEVGETGNQLSGGQRQAVALARALIRKPRLLILDDATSALDAGNQLRVQRLLYESPEWASRTVLLITQQLSLAERAHHILFLKEGSVCEQGTHLQLMERGGCYRSMVEALAAPSD</sequence>
<name>TAP1_RAT</name>